<protein>
    <recommendedName>
        <fullName>N-acetyltransferase ECO1</fullName>
        <ecNumber>2.3.1.-</ecNumber>
    </recommendedName>
    <alternativeName>
        <fullName>Establishment of cohesion protein 1</fullName>
    </alternativeName>
</protein>
<gene>
    <name type="primary">ECO1</name>
    <name type="ordered locus">DEHA2F26356g</name>
</gene>
<feature type="chain" id="PRO_0000074547" description="N-acetyltransferase ECO1">
    <location>
        <begin position="1"/>
        <end position="288"/>
    </location>
</feature>
<feature type="zinc finger region" description="CCHH-type">
    <location>
        <begin position="50"/>
        <end position="74"/>
    </location>
</feature>
<feature type="region of interest" description="Disordered" evidence="2">
    <location>
        <begin position="1"/>
        <end position="50"/>
    </location>
</feature>
<feature type="compositionally biased region" description="Low complexity" evidence="2">
    <location>
        <begin position="7"/>
        <end position="18"/>
    </location>
</feature>
<feature type="compositionally biased region" description="Polar residues" evidence="2">
    <location>
        <begin position="27"/>
        <end position="50"/>
    </location>
</feature>
<dbReference type="EC" id="2.3.1.-"/>
<dbReference type="EMBL" id="CR382138">
    <property type="protein sequence ID" value="CAR66419.1"/>
    <property type="molecule type" value="Genomic_DNA"/>
</dbReference>
<dbReference type="RefSeq" id="XP_002770903.1">
    <property type="nucleotide sequence ID" value="XM_002770857.1"/>
</dbReference>
<dbReference type="SMR" id="Q6BJY5"/>
<dbReference type="FunCoup" id="Q6BJY5">
    <property type="interactions" value="36"/>
</dbReference>
<dbReference type="STRING" id="284592.Q6BJY5"/>
<dbReference type="GeneID" id="8999074"/>
<dbReference type="KEGG" id="dha:DEHA2F26356g"/>
<dbReference type="eggNOG" id="KOG3014">
    <property type="taxonomic scope" value="Eukaryota"/>
</dbReference>
<dbReference type="HOGENOM" id="CLU_039183_2_1_1"/>
<dbReference type="InParanoid" id="Q6BJY5"/>
<dbReference type="OMA" id="PSITHQE"/>
<dbReference type="OrthoDB" id="428854at2759"/>
<dbReference type="Proteomes" id="UP000000599">
    <property type="component" value="Chromosome F"/>
</dbReference>
<dbReference type="GO" id="GO:0000785">
    <property type="term" value="C:chromatin"/>
    <property type="evidence" value="ECO:0007669"/>
    <property type="project" value="TreeGrafter"/>
</dbReference>
<dbReference type="GO" id="GO:0005634">
    <property type="term" value="C:nucleus"/>
    <property type="evidence" value="ECO:0007669"/>
    <property type="project" value="UniProtKB-SubCell"/>
</dbReference>
<dbReference type="GO" id="GO:0061733">
    <property type="term" value="F:protein-lysine-acetyltransferase activity"/>
    <property type="evidence" value="ECO:0007669"/>
    <property type="project" value="TreeGrafter"/>
</dbReference>
<dbReference type="GO" id="GO:0008270">
    <property type="term" value="F:zinc ion binding"/>
    <property type="evidence" value="ECO:0007669"/>
    <property type="project" value="UniProtKB-KW"/>
</dbReference>
<dbReference type="GO" id="GO:0007064">
    <property type="term" value="P:mitotic sister chromatid cohesion"/>
    <property type="evidence" value="ECO:0007669"/>
    <property type="project" value="TreeGrafter"/>
</dbReference>
<dbReference type="CDD" id="cd04301">
    <property type="entry name" value="NAT_SF"/>
    <property type="match status" value="1"/>
</dbReference>
<dbReference type="Gene3D" id="3.40.630.30">
    <property type="match status" value="1"/>
</dbReference>
<dbReference type="InterPro" id="IPR028005">
    <property type="entry name" value="AcTrfase_ESCO_Znf_dom"/>
</dbReference>
<dbReference type="InterPro" id="IPR016181">
    <property type="entry name" value="Acyl_CoA_acyltransferase"/>
</dbReference>
<dbReference type="InterPro" id="IPR028009">
    <property type="entry name" value="ESCO_Acetyltransf_dom"/>
</dbReference>
<dbReference type="PANTHER" id="PTHR45884">
    <property type="entry name" value="N-ACETYLTRANSFERASE ECO"/>
    <property type="match status" value="1"/>
</dbReference>
<dbReference type="PANTHER" id="PTHR45884:SF2">
    <property type="entry name" value="N-ACETYLTRANSFERASE ECO"/>
    <property type="match status" value="1"/>
</dbReference>
<dbReference type="Pfam" id="PF13880">
    <property type="entry name" value="Acetyltransf_13"/>
    <property type="match status" value="1"/>
</dbReference>
<dbReference type="Pfam" id="PF13878">
    <property type="entry name" value="zf-C2H2_3"/>
    <property type="match status" value="1"/>
</dbReference>
<dbReference type="SUPFAM" id="SSF55729">
    <property type="entry name" value="Acyl-CoA N-acyltransferases (Nat)"/>
    <property type="match status" value="1"/>
</dbReference>
<accession>Q6BJY5</accession>
<accession>B5RUP1</accession>
<reference key="1">
    <citation type="journal article" date="2004" name="Nature">
        <title>Genome evolution in yeasts.</title>
        <authorList>
            <person name="Dujon B."/>
            <person name="Sherman D."/>
            <person name="Fischer G."/>
            <person name="Durrens P."/>
            <person name="Casaregola S."/>
            <person name="Lafontaine I."/>
            <person name="de Montigny J."/>
            <person name="Marck C."/>
            <person name="Neuveglise C."/>
            <person name="Talla E."/>
            <person name="Goffard N."/>
            <person name="Frangeul L."/>
            <person name="Aigle M."/>
            <person name="Anthouard V."/>
            <person name="Babour A."/>
            <person name="Barbe V."/>
            <person name="Barnay S."/>
            <person name="Blanchin S."/>
            <person name="Beckerich J.-M."/>
            <person name="Beyne E."/>
            <person name="Bleykasten C."/>
            <person name="Boisrame A."/>
            <person name="Boyer J."/>
            <person name="Cattolico L."/>
            <person name="Confanioleri F."/>
            <person name="de Daruvar A."/>
            <person name="Despons L."/>
            <person name="Fabre E."/>
            <person name="Fairhead C."/>
            <person name="Ferry-Dumazet H."/>
            <person name="Groppi A."/>
            <person name="Hantraye F."/>
            <person name="Hennequin C."/>
            <person name="Jauniaux N."/>
            <person name="Joyet P."/>
            <person name="Kachouri R."/>
            <person name="Kerrest A."/>
            <person name="Koszul R."/>
            <person name="Lemaire M."/>
            <person name="Lesur I."/>
            <person name="Ma L."/>
            <person name="Muller H."/>
            <person name="Nicaud J.-M."/>
            <person name="Nikolski M."/>
            <person name="Oztas S."/>
            <person name="Ozier-Kalogeropoulos O."/>
            <person name="Pellenz S."/>
            <person name="Potier S."/>
            <person name="Richard G.-F."/>
            <person name="Straub M.-L."/>
            <person name="Suleau A."/>
            <person name="Swennen D."/>
            <person name="Tekaia F."/>
            <person name="Wesolowski-Louvel M."/>
            <person name="Westhof E."/>
            <person name="Wirth B."/>
            <person name="Zeniou-Meyer M."/>
            <person name="Zivanovic Y."/>
            <person name="Bolotin-Fukuhara M."/>
            <person name="Thierry A."/>
            <person name="Bouchier C."/>
            <person name="Caudron B."/>
            <person name="Scarpelli C."/>
            <person name="Gaillardin C."/>
            <person name="Weissenbach J."/>
            <person name="Wincker P."/>
            <person name="Souciet J.-L."/>
        </authorList>
    </citation>
    <scope>NUCLEOTIDE SEQUENCE [LARGE SCALE GENOMIC DNA]</scope>
    <source>
        <strain>ATCC 36239 / CBS 767 / BCRC 21394 / JCM 1990 / NBRC 0083 / IGC 2968</strain>
    </source>
</reference>
<name>ECO1_DEBHA</name>
<keyword id="KW-0012">Acyltransferase</keyword>
<keyword id="KW-0131">Cell cycle</keyword>
<keyword id="KW-0479">Metal-binding</keyword>
<keyword id="KW-0539">Nucleus</keyword>
<keyword id="KW-1185">Reference proteome</keyword>
<keyword id="KW-0808">Transferase</keyword>
<keyword id="KW-0862">Zinc</keyword>
<keyword id="KW-0863">Zinc-finger</keyword>
<sequence length="288" mass="32257">MKRDITQLLSPELSQSSSRNDKKRKPTNSNKKVQTVLNFPSSSPNASQSTTCPTCGMTYYSHVSKDNDVHNKYHFNFINGIPWPTSFCNNVLERFIVVDHTTGKAKGTSKSKKSQAASKETLVMTIDRRASKQVKRVEEILKVVNGELNAASDGKAWQKDHKGPIQGRAFIVVIDGRAIGICTTEPIQDVDQQCRWIIHRTQALVPNQVNRSIKLGISRIWIAPKWRRYGLARRLLDIVLVHSVYGIVLDKKEIGFSQPSFSGGLLAKSFNGVTHKSGEILIPVYLEE</sequence>
<evidence type="ECO:0000250" key="1"/>
<evidence type="ECO:0000256" key="2">
    <source>
        <dbReference type="SAM" id="MobiDB-lite"/>
    </source>
</evidence>
<evidence type="ECO:0000305" key="3"/>
<proteinExistence type="inferred from homology"/>
<organism>
    <name type="scientific">Debaryomyces hansenii (strain ATCC 36239 / CBS 767 / BCRC 21394 / JCM 1990 / NBRC 0083 / IGC 2968)</name>
    <name type="common">Yeast</name>
    <name type="synonym">Torulaspora hansenii</name>
    <dbReference type="NCBI Taxonomy" id="284592"/>
    <lineage>
        <taxon>Eukaryota</taxon>
        <taxon>Fungi</taxon>
        <taxon>Dikarya</taxon>
        <taxon>Ascomycota</taxon>
        <taxon>Saccharomycotina</taxon>
        <taxon>Pichiomycetes</taxon>
        <taxon>Debaryomycetaceae</taxon>
        <taxon>Debaryomyces</taxon>
    </lineage>
</organism>
<comment type="function">
    <text evidence="1">Probable acetyltransferase required for the establishment of sister chromatid cohesion and couple the processes of cohesion and DNA replication to ensure that only sister chromatids become paired together. In contrast to the structural cohesins, the deposition and establishment factors are required only during S phase. Acts by acetylating the cohesin complex component SMC3 (By similarity).</text>
</comment>
<comment type="subcellular location">
    <subcellularLocation>
        <location evidence="1">Nucleus</location>
    </subcellularLocation>
</comment>
<comment type="similarity">
    <text evidence="3">Belongs to the acetyltransferase family. ECO subfamily.</text>
</comment>